<proteinExistence type="inferred from homology"/>
<comment type="function">
    <text evidence="1">Synthesizes alpha-1,4-glucan chains using ADP-glucose.</text>
</comment>
<comment type="catalytic activity">
    <reaction evidence="1">
        <text>[(1-&gt;4)-alpha-D-glucosyl](n) + ADP-alpha-D-glucose = [(1-&gt;4)-alpha-D-glucosyl](n+1) + ADP + H(+)</text>
        <dbReference type="Rhea" id="RHEA:18189"/>
        <dbReference type="Rhea" id="RHEA-COMP:9584"/>
        <dbReference type="Rhea" id="RHEA-COMP:9587"/>
        <dbReference type="ChEBI" id="CHEBI:15378"/>
        <dbReference type="ChEBI" id="CHEBI:15444"/>
        <dbReference type="ChEBI" id="CHEBI:57498"/>
        <dbReference type="ChEBI" id="CHEBI:456216"/>
        <dbReference type="EC" id="2.4.1.21"/>
    </reaction>
</comment>
<comment type="pathway">
    <text evidence="1">Glycan biosynthesis; glycogen biosynthesis.</text>
</comment>
<comment type="similarity">
    <text evidence="1">Belongs to the glycosyltransferase 1 family. Bacterial/plant glycogen synthase subfamily.</text>
</comment>
<dbReference type="EC" id="2.4.1.21" evidence="1"/>
<dbReference type="EMBL" id="CR555306">
    <property type="protein sequence ID" value="CAI10067.1"/>
    <property type="molecule type" value="Genomic_DNA"/>
</dbReference>
<dbReference type="RefSeq" id="WP_011239712.1">
    <property type="nucleotide sequence ID" value="NC_006513.1"/>
</dbReference>
<dbReference type="SMR" id="Q5NXZ7"/>
<dbReference type="STRING" id="76114.ebA6917"/>
<dbReference type="CAZy" id="GT5">
    <property type="family name" value="Glycosyltransferase Family 5"/>
</dbReference>
<dbReference type="KEGG" id="eba:ebA6917"/>
<dbReference type="eggNOG" id="COG0297">
    <property type="taxonomic scope" value="Bacteria"/>
</dbReference>
<dbReference type="HOGENOM" id="CLU_009583_18_2_4"/>
<dbReference type="OrthoDB" id="9808590at2"/>
<dbReference type="UniPathway" id="UPA00164"/>
<dbReference type="Proteomes" id="UP000006552">
    <property type="component" value="Chromosome"/>
</dbReference>
<dbReference type="GO" id="GO:0009011">
    <property type="term" value="F:alpha-1,4-glucan glucosyltransferase (ADP-glucose donor) activity"/>
    <property type="evidence" value="ECO:0007669"/>
    <property type="project" value="UniProtKB-UniRule"/>
</dbReference>
<dbReference type="GO" id="GO:0004373">
    <property type="term" value="F:alpha-1,4-glucan glucosyltransferase (UDP-glucose donor) activity"/>
    <property type="evidence" value="ECO:0007669"/>
    <property type="project" value="InterPro"/>
</dbReference>
<dbReference type="GO" id="GO:0005978">
    <property type="term" value="P:glycogen biosynthetic process"/>
    <property type="evidence" value="ECO:0007669"/>
    <property type="project" value="UniProtKB-UniRule"/>
</dbReference>
<dbReference type="CDD" id="cd03791">
    <property type="entry name" value="GT5_Glycogen_synthase_DULL1-like"/>
    <property type="match status" value="1"/>
</dbReference>
<dbReference type="Gene3D" id="3.40.50.2000">
    <property type="entry name" value="Glycogen Phosphorylase B"/>
    <property type="match status" value="2"/>
</dbReference>
<dbReference type="HAMAP" id="MF_00484">
    <property type="entry name" value="Glycogen_synth"/>
    <property type="match status" value="1"/>
</dbReference>
<dbReference type="InterPro" id="IPR001296">
    <property type="entry name" value="Glyco_trans_1"/>
</dbReference>
<dbReference type="InterPro" id="IPR011835">
    <property type="entry name" value="GS/SS"/>
</dbReference>
<dbReference type="InterPro" id="IPR013534">
    <property type="entry name" value="Starch_synth_cat_dom"/>
</dbReference>
<dbReference type="NCBIfam" id="TIGR02095">
    <property type="entry name" value="glgA"/>
    <property type="match status" value="1"/>
</dbReference>
<dbReference type="NCBIfam" id="NF001899">
    <property type="entry name" value="PRK00654.1-2"/>
    <property type="match status" value="1"/>
</dbReference>
<dbReference type="PANTHER" id="PTHR45825:SF11">
    <property type="entry name" value="ALPHA AMYLASE DOMAIN-CONTAINING PROTEIN"/>
    <property type="match status" value="1"/>
</dbReference>
<dbReference type="PANTHER" id="PTHR45825">
    <property type="entry name" value="GRANULE-BOUND STARCH SYNTHASE 1, CHLOROPLASTIC/AMYLOPLASTIC"/>
    <property type="match status" value="1"/>
</dbReference>
<dbReference type="Pfam" id="PF08323">
    <property type="entry name" value="Glyco_transf_5"/>
    <property type="match status" value="1"/>
</dbReference>
<dbReference type="Pfam" id="PF00534">
    <property type="entry name" value="Glycos_transf_1"/>
    <property type="match status" value="1"/>
</dbReference>
<dbReference type="SUPFAM" id="SSF53756">
    <property type="entry name" value="UDP-Glycosyltransferase/glycogen phosphorylase"/>
    <property type="match status" value="1"/>
</dbReference>
<name>GLGA_AROAE</name>
<gene>
    <name evidence="1" type="primary">glgA</name>
    <name type="ordered locus">AZOSEA39420</name>
    <name type="ORF">ebA6917</name>
</gene>
<evidence type="ECO:0000255" key="1">
    <source>
        <dbReference type="HAMAP-Rule" id="MF_00484"/>
    </source>
</evidence>
<accession>Q5NXZ7</accession>
<reference key="1">
    <citation type="journal article" date="2005" name="Arch. Microbiol.">
        <title>The genome sequence of an anaerobic aromatic-degrading denitrifying bacterium, strain EbN1.</title>
        <authorList>
            <person name="Rabus R."/>
            <person name="Kube M."/>
            <person name="Heider J."/>
            <person name="Beck A."/>
            <person name="Heitmann K."/>
            <person name="Widdel F."/>
            <person name="Reinhardt R."/>
        </authorList>
    </citation>
    <scope>NUCLEOTIDE SEQUENCE [LARGE SCALE GENOMIC DNA]</scope>
    <source>
        <strain>DSM 19018 / LMG 30748 / EbN1</strain>
    </source>
</reference>
<keyword id="KW-0320">Glycogen biosynthesis</keyword>
<keyword id="KW-0328">Glycosyltransferase</keyword>
<keyword id="KW-1185">Reference proteome</keyword>
<keyword id="KW-0808">Transferase</keyword>
<sequence>MNATRKAARLRVLFATPECAPWAKTGGLGDVSASLPAALAALGLDVCVLLPGYPSVRQAARNARKVADIRSAHGLPSARLLRGRLPSGVPALVLDCPSLYRREGGPYQDGEGVDYTDNALRFGLLSHVAARLASAASPLVWRADILHCNDWPTALAPAYLKLGLPGAAPSLIVVHNLAFQGIFPLDVAERLGLPPESLKSEGVEYWGKLSFLKAGLYYADRIVAVSPTYAREIRTEAHGCGMQGLLETRANRLAGILNGIDMDAWNPRTDPHLDTNYDADTLEDKAPNKRALQAELGLAADDDALLLGMVTRLTDQKGIDLVLDALPELLARPVQLALLGGGDARFEQAWRQRAAARPDRIAAVIGFDERLAHRIEAGADAFVMPSRFEPCGLNQMYSQRYGTPPIVRATGGLVDSVGDFSVDGLHRGEASGFLFAEATPAALVEAVDRALKVFADRVAWRTLCCNGMARDFSWGGSAGRYARLYVAMRAAAAA</sequence>
<organism>
    <name type="scientific">Aromatoleum aromaticum (strain DSM 19018 / LMG 30748 / EbN1)</name>
    <name type="common">Azoarcus sp. (strain EbN1)</name>
    <dbReference type="NCBI Taxonomy" id="76114"/>
    <lineage>
        <taxon>Bacteria</taxon>
        <taxon>Pseudomonadati</taxon>
        <taxon>Pseudomonadota</taxon>
        <taxon>Betaproteobacteria</taxon>
        <taxon>Rhodocyclales</taxon>
        <taxon>Rhodocyclaceae</taxon>
        <taxon>Aromatoleum</taxon>
    </lineage>
</organism>
<protein>
    <recommendedName>
        <fullName evidence="1">Glycogen synthase</fullName>
        <ecNumber evidence="1">2.4.1.21</ecNumber>
    </recommendedName>
    <alternativeName>
        <fullName evidence="1">Starch [bacterial glycogen] synthase</fullName>
    </alternativeName>
</protein>
<feature type="chain" id="PRO_0000230234" description="Glycogen synthase">
    <location>
        <begin position="1"/>
        <end position="494"/>
    </location>
</feature>
<feature type="binding site" evidence="1">
    <location>
        <position position="24"/>
    </location>
    <ligand>
        <name>ADP-alpha-D-glucose</name>
        <dbReference type="ChEBI" id="CHEBI:57498"/>
    </ligand>
</feature>